<protein>
    <recommendedName>
        <fullName evidence="1">3-octaprenyl-4-hydroxybenzoate carboxy-lyase</fullName>
        <ecNumber evidence="1">4.1.1.98</ecNumber>
    </recommendedName>
    <alternativeName>
        <fullName evidence="1">Polyprenyl p-hydroxybenzoate decarboxylase</fullName>
    </alternativeName>
</protein>
<reference key="1">
    <citation type="journal article" date="2011" name="Stand. Genomic Sci.">
        <title>Complete genome sequence of the halophilic and highly halotolerant Chromohalobacter salexigens type strain (1H11(T)).</title>
        <authorList>
            <person name="Copeland A."/>
            <person name="O'Connor K."/>
            <person name="Lucas S."/>
            <person name="Lapidus A."/>
            <person name="Berry K.W."/>
            <person name="Detter J.C."/>
            <person name="Del Rio T.G."/>
            <person name="Hammon N."/>
            <person name="Dalin E."/>
            <person name="Tice H."/>
            <person name="Pitluck S."/>
            <person name="Bruce D."/>
            <person name="Goodwin L."/>
            <person name="Han C."/>
            <person name="Tapia R."/>
            <person name="Saunders E."/>
            <person name="Schmutz J."/>
            <person name="Brettin T."/>
            <person name="Larimer F."/>
            <person name="Land M."/>
            <person name="Hauser L."/>
            <person name="Vargas C."/>
            <person name="Nieto J.J."/>
            <person name="Kyrpides N.C."/>
            <person name="Ivanova N."/>
            <person name="Goker M."/>
            <person name="Klenk H.P."/>
            <person name="Csonka L.N."/>
            <person name="Woyke T."/>
        </authorList>
    </citation>
    <scope>NUCLEOTIDE SEQUENCE [LARGE SCALE GENOMIC DNA]</scope>
    <source>
        <strain>ATCC BAA-138 / DSM 3043 / CIP 106854 / NCIMB 13768 / 1H11</strain>
    </source>
</reference>
<feature type="chain" id="PRO_0000267660" description="3-octaprenyl-4-hydroxybenzoate carboxy-lyase">
    <location>
        <begin position="1"/>
        <end position="508"/>
    </location>
</feature>
<feature type="region of interest" description="Disordered" evidence="2">
    <location>
        <begin position="483"/>
        <end position="508"/>
    </location>
</feature>
<feature type="compositionally biased region" description="Basic and acidic residues" evidence="2">
    <location>
        <begin position="498"/>
        <end position="508"/>
    </location>
</feature>
<feature type="active site" description="Proton donor" evidence="1">
    <location>
        <position position="287"/>
    </location>
</feature>
<feature type="binding site" evidence="1">
    <location>
        <position position="172"/>
    </location>
    <ligand>
        <name>Mn(2+)</name>
        <dbReference type="ChEBI" id="CHEBI:29035"/>
    </ligand>
</feature>
<feature type="binding site" evidence="1">
    <location>
        <begin position="175"/>
        <end position="177"/>
    </location>
    <ligand>
        <name>prenylated FMN</name>
        <dbReference type="ChEBI" id="CHEBI:87746"/>
    </ligand>
</feature>
<feature type="binding site" evidence="1">
    <location>
        <begin position="189"/>
        <end position="191"/>
    </location>
    <ligand>
        <name>prenylated FMN</name>
        <dbReference type="ChEBI" id="CHEBI:87746"/>
    </ligand>
</feature>
<feature type="binding site" evidence="1">
    <location>
        <begin position="194"/>
        <end position="195"/>
    </location>
    <ligand>
        <name>prenylated FMN</name>
        <dbReference type="ChEBI" id="CHEBI:87746"/>
    </ligand>
</feature>
<feature type="binding site" evidence="1">
    <location>
        <position position="238"/>
    </location>
    <ligand>
        <name>Mn(2+)</name>
        <dbReference type="ChEBI" id="CHEBI:29035"/>
    </ligand>
</feature>
<evidence type="ECO:0000255" key="1">
    <source>
        <dbReference type="HAMAP-Rule" id="MF_01636"/>
    </source>
</evidence>
<evidence type="ECO:0000256" key="2">
    <source>
        <dbReference type="SAM" id="MobiDB-lite"/>
    </source>
</evidence>
<evidence type="ECO:0000305" key="3"/>
<proteinExistence type="inferred from homology"/>
<gene>
    <name evidence="1" type="primary">ubiD</name>
    <name type="ordered locus">Csal_0585</name>
</gene>
<keyword id="KW-1003">Cell membrane</keyword>
<keyword id="KW-0210">Decarboxylase</keyword>
<keyword id="KW-0285">Flavoprotein</keyword>
<keyword id="KW-0288">FMN</keyword>
<keyword id="KW-0456">Lyase</keyword>
<keyword id="KW-0464">Manganese</keyword>
<keyword id="KW-0472">Membrane</keyword>
<keyword id="KW-0479">Metal-binding</keyword>
<keyword id="KW-1185">Reference proteome</keyword>
<keyword id="KW-0831">Ubiquinone biosynthesis</keyword>
<comment type="function">
    <text evidence="1">Catalyzes the decarboxylation of 3-octaprenyl-4-hydroxy benzoate to 2-octaprenylphenol, an intermediate step in ubiquinone biosynthesis.</text>
</comment>
<comment type="catalytic activity">
    <reaction evidence="1">
        <text>a 4-hydroxy-3-(all-trans-polyprenyl)benzoate + H(+) = a 2-(all-trans-polyprenyl)phenol + CO2</text>
        <dbReference type="Rhea" id="RHEA:41680"/>
        <dbReference type="Rhea" id="RHEA-COMP:9514"/>
        <dbReference type="Rhea" id="RHEA-COMP:9516"/>
        <dbReference type="ChEBI" id="CHEBI:1269"/>
        <dbReference type="ChEBI" id="CHEBI:15378"/>
        <dbReference type="ChEBI" id="CHEBI:16526"/>
        <dbReference type="ChEBI" id="CHEBI:78396"/>
        <dbReference type="EC" id="4.1.1.98"/>
    </reaction>
</comment>
<comment type="cofactor">
    <cofactor evidence="1">
        <name>prenylated FMN</name>
        <dbReference type="ChEBI" id="CHEBI:87746"/>
    </cofactor>
    <text evidence="1">Binds 1 prenylated FMN per subunit.</text>
</comment>
<comment type="cofactor">
    <cofactor evidence="1">
        <name>Mn(2+)</name>
        <dbReference type="ChEBI" id="CHEBI:29035"/>
    </cofactor>
</comment>
<comment type="pathway">
    <text evidence="1">Cofactor biosynthesis; ubiquinone biosynthesis.</text>
</comment>
<comment type="subunit">
    <text evidence="1">Homohexamer.</text>
</comment>
<comment type="subcellular location">
    <subcellularLocation>
        <location evidence="1">Cell membrane</location>
        <topology evidence="1">Peripheral membrane protein</topology>
    </subcellularLocation>
</comment>
<comment type="similarity">
    <text evidence="1">Belongs to the UbiD family.</text>
</comment>
<comment type="sequence caution" evidence="3">
    <conflict type="erroneous initiation">
        <sequence resource="EMBL-CDS" id="ABE57947"/>
    </conflict>
</comment>
<dbReference type="EC" id="4.1.1.98" evidence="1"/>
<dbReference type="EMBL" id="CP000285">
    <property type="protein sequence ID" value="ABE57947.1"/>
    <property type="status" value="ALT_INIT"/>
    <property type="molecule type" value="Genomic_DNA"/>
</dbReference>
<dbReference type="RefSeq" id="WP_035414511.1">
    <property type="nucleotide sequence ID" value="NC_007963.1"/>
</dbReference>
<dbReference type="SMR" id="Q1R011"/>
<dbReference type="STRING" id="290398.Csal_0585"/>
<dbReference type="GeneID" id="95333340"/>
<dbReference type="KEGG" id="csa:Csal_0585"/>
<dbReference type="eggNOG" id="COG0043">
    <property type="taxonomic scope" value="Bacteria"/>
</dbReference>
<dbReference type="HOGENOM" id="CLU_023348_4_1_6"/>
<dbReference type="OrthoDB" id="9809841at2"/>
<dbReference type="UniPathway" id="UPA00232"/>
<dbReference type="Proteomes" id="UP000000239">
    <property type="component" value="Chromosome"/>
</dbReference>
<dbReference type="GO" id="GO:0005829">
    <property type="term" value="C:cytosol"/>
    <property type="evidence" value="ECO:0007669"/>
    <property type="project" value="TreeGrafter"/>
</dbReference>
<dbReference type="GO" id="GO:0005886">
    <property type="term" value="C:plasma membrane"/>
    <property type="evidence" value="ECO:0007669"/>
    <property type="project" value="UniProtKB-SubCell"/>
</dbReference>
<dbReference type="GO" id="GO:0008694">
    <property type="term" value="F:3-octaprenyl-4-hydroxybenzoate carboxy-lyase activity"/>
    <property type="evidence" value="ECO:0007669"/>
    <property type="project" value="UniProtKB-UniRule"/>
</dbReference>
<dbReference type="GO" id="GO:0046872">
    <property type="term" value="F:metal ion binding"/>
    <property type="evidence" value="ECO:0007669"/>
    <property type="project" value="UniProtKB-KW"/>
</dbReference>
<dbReference type="GO" id="GO:0006744">
    <property type="term" value="P:ubiquinone biosynthetic process"/>
    <property type="evidence" value="ECO:0007669"/>
    <property type="project" value="UniProtKB-UniRule"/>
</dbReference>
<dbReference type="FunFam" id="1.20.5.570:FF:000001">
    <property type="entry name" value="3-octaprenyl-4-hydroxybenzoate carboxy-lyase"/>
    <property type="match status" value="1"/>
</dbReference>
<dbReference type="FunFam" id="3.40.1670.10:FF:000001">
    <property type="entry name" value="3-octaprenyl-4-hydroxybenzoate carboxy-lyase"/>
    <property type="match status" value="1"/>
</dbReference>
<dbReference type="Gene3D" id="1.20.5.570">
    <property type="entry name" value="Single helix bin"/>
    <property type="match status" value="1"/>
</dbReference>
<dbReference type="Gene3D" id="3.40.1670.10">
    <property type="entry name" value="UbiD C-terminal domain-like"/>
    <property type="match status" value="1"/>
</dbReference>
<dbReference type="HAMAP" id="MF_01636">
    <property type="entry name" value="UbiD"/>
    <property type="match status" value="1"/>
</dbReference>
<dbReference type="InterPro" id="IPR002830">
    <property type="entry name" value="UbiD"/>
</dbReference>
<dbReference type="InterPro" id="IPR049381">
    <property type="entry name" value="UbiD-like_C"/>
</dbReference>
<dbReference type="InterPro" id="IPR049383">
    <property type="entry name" value="UbiD-like_N"/>
</dbReference>
<dbReference type="InterPro" id="IPR023677">
    <property type="entry name" value="UbiD_bacteria"/>
</dbReference>
<dbReference type="InterPro" id="IPR048304">
    <property type="entry name" value="UbiD_Rift_dom"/>
</dbReference>
<dbReference type="NCBIfam" id="NF008175">
    <property type="entry name" value="PRK10922.1"/>
    <property type="match status" value="1"/>
</dbReference>
<dbReference type="NCBIfam" id="TIGR00148">
    <property type="entry name" value="UbiD family decarboxylase"/>
    <property type="match status" value="1"/>
</dbReference>
<dbReference type="PANTHER" id="PTHR30108">
    <property type="entry name" value="3-OCTAPRENYL-4-HYDROXYBENZOATE CARBOXY-LYASE-RELATED"/>
    <property type="match status" value="1"/>
</dbReference>
<dbReference type="PANTHER" id="PTHR30108:SF17">
    <property type="entry name" value="FERULIC ACID DECARBOXYLASE 1"/>
    <property type="match status" value="1"/>
</dbReference>
<dbReference type="Pfam" id="PF01977">
    <property type="entry name" value="UbiD"/>
    <property type="match status" value="1"/>
</dbReference>
<dbReference type="Pfam" id="PF20696">
    <property type="entry name" value="UbiD_C"/>
    <property type="match status" value="1"/>
</dbReference>
<dbReference type="Pfam" id="PF20695">
    <property type="entry name" value="UbiD_N"/>
    <property type="match status" value="1"/>
</dbReference>
<dbReference type="SUPFAM" id="SSF50475">
    <property type="entry name" value="FMN-binding split barrel"/>
    <property type="match status" value="1"/>
</dbReference>
<dbReference type="SUPFAM" id="SSF143968">
    <property type="entry name" value="UbiD C-terminal domain-like"/>
    <property type="match status" value="1"/>
</dbReference>
<sequence length="508" mass="56897">MKYRDLRDFIAALEARGELTRVTAEVDPYLEITEICDRTLRAGGPALLFENVKGHAMPLLGNLFGTPERVALGMGQDSTAALREVGELLAFLKEPEPPKGFRDAWEKLPIFKQAMSMGPKTLRKAPCQEVILEGDDVDLDRLPIQHCWPGDVAPLVTWSLVVTKGPNKTRQNLGIYRQQKLGKNRLIMRWLSHRGGALDFQEWQSAHPGEPFPVAVALGADPATILGAVTPVPDNLSEYAFAGLLRGSRTELVKCGHADLEVPASSEIVLEGYIYPDDTAPEGPYGDHTGYYNEVETFPVFTVERITHRRDPIYHSTYTGRPPDEPAILGLALNEVFVPILRKQFPEIVDFYLPPEGCSYRMAVVTMKKQYPGHAKRVMMGVWSFLRQFMYTKFVIVLDDDVDARNWEDVIWAITTRMDPARDTVMVENTPIDYLDFASPTAGLGSKMGLDATTKWAGETQREWGTPIVMDEAVKRRVDERWGEYGIATPPPPPRHSPPSDERGHDDV</sequence>
<organism>
    <name type="scientific">Chromohalobacter salexigens (strain ATCC BAA-138 / DSM 3043 / CIP 106854 / NCIMB 13768 / 1H11)</name>
    <dbReference type="NCBI Taxonomy" id="290398"/>
    <lineage>
        <taxon>Bacteria</taxon>
        <taxon>Pseudomonadati</taxon>
        <taxon>Pseudomonadota</taxon>
        <taxon>Gammaproteobacteria</taxon>
        <taxon>Oceanospirillales</taxon>
        <taxon>Halomonadaceae</taxon>
        <taxon>Chromohalobacter</taxon>
    </lineage>
</organism>
<accession>Q1R011</accession>
<name>UBID_CHRSD</name>